<sequence>MGKENQQGYFGEFGGRYSPEILHDALVELETTYKKLKKNKHFKKELEYYRKNYIGRPSPLTYAERLSKVWGGAKIWLKREDLNHTGAHKINNTIGQVLIAKAMGKTRIIAETGAGQHGVATATVGAMFQMETVVYMGEEDLRRQELNAIRMRMLGAKVVGVSSGTATLKDATSEAMRDWALNVSNTHYIVGSSIGPHPFPTIVRDFQSVIGIESRKQFKKVNDKLPNAVIACVGGGSNAIGMFYGFIQDKKVKLFGVEAGGYSSDPGSHSATIQFGRTGFLHGTKTLVIQDDFGQIVPAHSVSAGLDYPGVGPEHAYFHKSGRVEYVNVDDEGALDAFIEVCRIEGIIPALETAHAFRYAKDLARTMSKKENILICLSGRGDKDVAEVSRLRKGEFI</sequence>
<organism>
    <name type="scientific">Leptospira interrogans serogroup Icterohaemorrhagiae serovar Lai (strain 56601)</name>
    <dbReference type="NCBI Taxonomy" id="189518"/>
    <lineage>
        <taxon>Bacteria</taxon>
        <taxon>Pseudomonadati</taxon>
        <taxon>Spirochaetota</taxon>
        <taxon>Spirochaetia</taxon>
        <taxon>Leptospirales</taxon>
        <taxon>Leptospiraceae</taxon>
        <taxon>Leptospira</taxon>
    </lineage>
</organism>
<comment type="function">
    <text evidence="1">The beta subunit is responsible for the synthesis of L-tryptophan from indole and L-serine.</text>
</comment>
<comment type="catalytic activity">
    <reaction evidence="1">
        <text>(1S,2R)-1-C-(indol-3-yl)glycerol 3-phosphate + L-serine = D-glyceraldehyde 3-phosphate + L-tryptophan + H2O</text>
        <dbReference type="Rhea" id="RHEA:10532"/>
        <dbReference type="ChEBI" id="CHEBI:15377"/>
        <dbReference type="ChEBI" id="CHEBI:33384"/>
        <dbReference type="ChEBI" id="CHEBI:57912"/>
        <dbReference type="ChEBI" id="CHEBI:58866"/>
        <dbReference type="ChEBI" id="CHEBI:59776"/>
        <dbReference type="EC" id="4.2.1.20"/>
    </reaction>
</comment>
<comment type="cofactor">
    <cofactor evidence="1">
        <name>pyridoxal 5'-phosphate</name>
        <dbReference type="ChEBI" id="CHEBI:597326"/>
    </cofactor>
</comment>
<comment type="pathway">
    <text evidence="1">Amino-acid biosynthesis; L-tryptophan biosynthesis; L-tryptophan from chorismate: step 5/5.</text>
</comment>
<comment type="subunit">
    <text evidence="1">Tetramer of two alpha and two beta chains.</text>
</comment>
<comment type="similarity">
    <text evidence="1">Belongs to the TrpB family.</text>
</comment>
<evidence type="ECO:0000255" key="1">
    <source>
        <dbReference type="HAMAP-Rule" id="MF_00133"/>
    </source>
</evidence>
<accession>Q8F149</accession>
<keyword id="KW-0028">Amino-acid biosynthesis</keyword>
<keyword id="KW-0057">Aromatic amino acid biosynthesis</keyword>
<keyword id="KW-0456">Lyase</keyword>
<keyword id="KW-0663">Pyridoxal phosphate</keyword>
<keyword id="KW-1185">Reference proteome</keyword>
<keyword id="KW-0822">Tryptophan biosynthesis</keyword>
<gene>
    <name evidence="1" type="primary">trpB</name>
    <name type="ordered locus">LA_3289</name>
</gene>
<protein>
    <recommendedName>
        <fullName evidence="1">Tryptophan synthase beta chain</fullName>
        <ecNumber evidence="1">4.2.1.20</ecNumber>
    </recommendedName>
</protein>
<reference key="1">
    <citation type="journal article" date="2003" name="Nature">
        <title>Unique physiological and pathogenic features of Leptospira interrogans revealed by whole-genome sequencing.</title>
        <authorList>
            <person name="Ren S.-X."/>
            <person name="Fu G."/>
            <person name="Jiang X.-G."/>
            <person name="Zeng R."/>
            <person name="Miao Y.-G."/>
            <person name="Xu H."/>
            <person name="Zhang Y.-X."/>
            <person name="Xiong H."/>
            <person name="Lu G."/>
            <person name="Lu L.-F."/>
            <person name="Jiang H.-Q."/>
            <person name="Jia J."/>
            <person name="Tu Y.-F."/>
            <person name="Jiang J.-X."/>
            <person name="Gu W.-Y."/>
            <person name="Zhang Y.-Q."/>
            <person name="Cai Z."/>
            <person name="Sheng H.-H."/>
            <person name="Yin H.-F."/>
            <person name="Zhang Y."/>
            <person name="Zhu G.-F."/>
            <person name="Wan M."/>
            <person name="Huang H.-L."/>
            <person name="Qian Z."/>
            <person name="Wang S.-Y."/>
            <person name="Ma W."/>
            <person name="Yao Z.-J."/>
            <person name="Shen Y."/>
            <person name="Qiang B.-Q."/>
            <person name="Xia Q.-C."/>
            <person name="Guo X.-K."/>
            <person name="Danchin A."/>
            <person name="Saint Girons I."/>
            <person name="Somerville R.L."/>
            <person name="Wen Y.-M."/>
            <person name="Shi M.-H."/>
            <person name="Chen Z."/>
            <person name="Xu J.-G."/>
            <person name="Zhao G.-P."/>
        </authorList>
    </citation>
    <scope>NUCLEOTIDE SEQUENCE [LARGE SCALE GENOMIC DNA]</scope>
    <source>
        <strain>56601</strain>
    </source>
</reference>
<name>TRPB_LEPIN</name>
<proteinExistence type="inferred from homology"/>
<feature type="chain" id="PRO_0000098963" description="Tryptophan synthase beta chain">
    <location>
        <begin position="1"/>
        <end position="397"/>
    </location>
</feature>
<feature type="modified residue" description="N6-(pyridoxal phosphate)lysine" evidence="1">
    <location>
        <position position="89"/>
    </location>
</feature>
<dbReference type="EC" id="4.2.1.20" evidence="1"/>
<dbReference type="EMBL" id="AE010300">
    <property type="protein sequence ID" value="AAN50487.1"/>
    <property type="molecule type" value="Genomic_DNA"/>
</dbReference>
<dbReference type="RefSeq" id="NP_713469.1">
    <property type="nucleotide sequence ID" value="NC_004342.2"/>
</dbReference>
<dbReference type="RefSeq" id="WP_000514163.1">
    <property type="nucleotide sequence ID" value="NC_004342.2"/>
</dbReference>
<dbReference type="SMR" id="Q8F149"/>
<dbReference type="FunCoup" id="Q8F149">
    <property type="interactions" value="477"/>
</dbReference>
<dbReference type="STRING" id="189518.LA_3289"/>
<dbReference type="PaxDb" id="189518-LA_3289"/>
<dbReference type="EnsemblBacteria" id="AAN50487">
    <property type="protein sequence ID" value="AAN50487"/>
    <property type="gene ID" value="LA_3289"/>
</dbReference>
<dbReference type="GeneID" id="61144191"/>
<dbReference type="KEGG" id="lil:LA_3289"/>
<dbReference type="PATRIC" id="fig|189518.3.peg.3259"/>
<dbReference type="HOGENOM" id="CLU_016734_3_1_12"/>
<dbReference type="InParanoid" id="Q8F149"/>
<dbReference type="OrthoDB" id="9766131at2"/>
<dbReference type="UniPathway" id="UPA00035">
    <property type="reaction ID" value="UER00044"/>
</dbReference>
<dbReference type="Proteomes" id="UP000001408">
    <property type="component" value="Chromosome I"/>
</dbReference>
<dbReference type="GO" id="GO:0005737">
    <property type="term" value="C:cytoplasm"/>
    <property type="evidence" value="ECO:0000318"/>
    <property type="project" value="GO_Central"/>
</dbReference>
<dbReference type="GO" id="GO:0004834">
    <property type="term" value="F:tryptophan synthase activity"/>
    <property type="evidence" value="ECO:0007669"/>
    <property type="project" value="UniProtKB-UniRule"/>
</dbReference>
<dbReference type="GO" id="GO:0000162">
    <property type="term" value="P:L-tryptophan biosynthetic process"/>
    <property type="evidence" value="ECO:0000318"/>
    <property type="project" value="GO_Central"/>
</dbReference>
<dbReference type="CDD" id="cd06446">
    <property type="entry name" value="Trp-synth_B"/>
    <property type="match status" value="1"/>
</dbReference>
<dbReference type="FunFam" id="3.40.50.1100:FF:000001">
    <property type="entry name" value="Tryptophan synthase beta chain"/>
    <property type="match status" value="1"/>
</dbReference>
<dbReference type="FunFam" id="3.40.50.1100:FF:000004">
    <property type="entry name" value="Tryptophan synthase beta chain"/>
    <property type="match status" value="1"/>
</dbReference>
<dbReference type="Gene3D" id="3.40.50.1100">
    <property type="match status" value="2"/>
</dbReference>
<dbReference type="HAMAP" id="MF_00133">
    <property type="entry name" value="Trp_synth_beta"/>
    <property type="match status" value="1"/>
</dbReference>
<dbReference type="InterPro" id="IPR006653">
    <property type="entry name" value="Trp_synth_b_CS"/>
</dbReference>
<dbReference type="InterPro" id="IPR006654">
    <property type="entry name" value="Trp_synth_beta"/>
</dbReference>
<dbReference type="InterPro" id="IPR023026">
    <property type="entry name" value="Trp_synth_beta/beta-like"/>
</dbReference>
<dbReference type="InterPro" id="IPR001926">
    <property type="entry name" value="TrpB-like_PALP"/>
</dbReference>
<dbReference type="InterPro" id="IPR036052">
    <property type="entry name" value="TrpB-like_PALP_sf"/>
</dbReference>
<dbReference type="NCBIfam" id="TIGR00263">
    <property type="entry name" value="trpB"/>
    <property type="match status" value="1"/>
</dbReference>
<dbReference type="PANTHER" id="PTHR48077:SF3">
    <property type="entry name" value="TRYPTOPHAN SYNTHASE"/>
    <property type="match status" value="1"/>
</dbReference>
<dbReference type="PANTHER" id="PTHR48077">
    <property type="entry name" value="TRYPTOPHAN SYNTHASE-RELATED"/>
    <property type="match status" value="1"/>
</dbReference>
<dbReference type="Pfam" id="PF00291">
    <property type="entry name" value="PALP"/>
    <property type="match status" value="1"/>
</dbReference>
<dbReference type="PIRSF" id="PIRSF001413">
    <property type="entry name" value="Trp_syn_beta"/>
    <property type="match status" value="1"/>
</dbReference>
<dbReference type="SUPFAM" id="SSF53686">
    <property type="entry name" value="Tryptophan synthase beta subunit-like PLP-dependent enzymes"/>
    <property type="match status" value="1"/>
</dbReference>
<dbReference type="PROSITE" id="PS00168">
    <property type="entry name" value="TRP_SYNTHASE_BETA"/>
    <property type="match status" value="1"/>
</dbReference>